<sequence length="932" mass="101774">MAAPTKCQLRGRLVLLCSLLGMLWEARASQIRYSVPEETEKGYIVGNISKDLALEPRELAERRVRIVSRGRTQLFSLNPRSGTLVTAGRIDREELCAQSPRCLVNFKVLVEDRVKLYGIEIEVTDINDSAPKFQAESLEVKINEIAVPGARYPLPEAIDPDVGVNSLQSYQLSPNHHFSLNVQTGDNGAINPELVLERALDREEATAHHLVLTASDGGEPRRSSTVRIHVTVLDTNDNAPVFAQRIYRVKVLENVPPGTWLLTATASDLDEGINGKVAYKFWKINEKQSLLFQLNENTGEISTAKSLDYEECSFYEMEIQAEDGGGLKGWTKVLISVEDVNDNRPEVTITSLFSPVREDAPQGTVILLFNAHDRDSGKNGQVVCSIQENLSFKLENSEEDYYRLLTAQILDREKASEYNITVTATDRGTPPLSTEIHITLQVTDINDNPPAFSQASYSVYLPENNARGTSIFSVIAYDPDSNENSRVIYSLAEDTIQGSPLSTYVSINSDTGVLYALCSFDYEQFRDLQMQVMASDSGSPPLSSNVSLRLFVLDQNDNAPEILYPALPTDGSTGVELAPRSAEPGYLVTKVVAVDRDSGQNAWLSYRLFKTSEPGLFSVGLHTGEVRTARALLDRDALKQSLVVAVQDHGQPPLSATVTLTVAIADSIPDILADLGSLQIPADLEASDLTLYLVVAVAVVSCVFLTFVITLLALRLRHWHSSHLLRATSDGLAGVPTSHFVGVDGVRAFLQTYSQEFSLTADSRKSHLIFPQPNYADTLISQQSCEKNEPLCVSVDSKFPIEDTPLVPQAPPNTDWRFSQAQRPGTSGSQNGDDTGTWPNNQFDTEMLQAMILASASEAADGSSTLGGGAGTMGLSARYGPQFTLQHVPDYRQNVYIPGSNATLTNAAGKRDGKAPAGGNGNKKKSGKKEKK</sequence>
<accession>Q5DRB1</accession>
<evidence type="ECO:0000250" key="1"/>
<evidence type="ECO:0000255" key="2"/>
<evidence type="ECO:0000255" key="3">
    <source>
        <dbReference type="PROSITE-ProRule" id="PRU00043"/>
    </source>
</evidence>
<evidence type="ECO:0000256" key="4">
    <source>
        <dbReference type="SAM" id="MobiDB-lite"/>
    </source>
</evidence>
<name>PCDG9_PANTR</name>
<gene>
    <name type="primary">PCDHGA9</name>
</gene>
<organism>
    <name type="scientific">Pan troglodytes</name>
    <name type="common">Chimpanzee</name>
    <dbReference type="NCBI Taxonomy" id="9598"/>
    <lineage>
        <taxon>Eukaryota</taxon>
        <taxon>Metazoa</taxon>
        <taxon>Chordata</taxon>
        <taxon>Craniata</taxon>
        <taxon>Vertebrata</taxon>
        <taxon>Euteleostomi</taxon>
        <taxon>Mammalia</taxon>
        <taxon>Eutheria</taxon>
        <taxon>Euarchontoglires</taxon>
        <taxon>Primates</taxon>
        <taxon>Haplorrhini</taxon>
        <taxon>Catarrhini</taxon>
        <taxon>Hominidae</taxon>
        <taxon>Pan</taxon>
    </lineage>
</organism>
<dbReference type="RefSeq" id="NP_001076026.1">
    <property type="nucleotide sequence ID" value="NM_001082557.4"/>
</dbReference>
<dbReference type="SMR" id="Q5DRB1"/>
<dbReference type="FunCoup" id="Q5DRB1">
    <property type="interactions" value="106"/>
</dbReference>
<dbReference type="GlyCosmos" id="Q5DRB1">
    <property type="glycosylation" value="5 sites, No reported glycans"/>
</dbReference>
<dbReference type="Ensembl" id="ENSPTRT00000061834.4">
    <property type="protein sequence ID" value="ENSPTRP00000054377.4"/>
    <property type="gene ID" value="ENSPTRG00000017346.7"/>
</dbReference>
<dbReference type="GeneID" id="100034689"/>
<dbReference type="KEGG" id="ptr:100034689"/>
<dbReference type="CTD" id="56107"/>
<dbReference type="GeneTree" id="ENSGT00940000162232"/>
<dbReference type="InParanoid" id="Q5DRB1"/>
<dbReference type="OrthoDB" id="11455at9604"/>
<dbReference type="Proteomes" id="UP000002277">
    <property type="component" value="Chromosome 5"/>
</dbReference>
<dbReference type="Bgee" id="ENSPTRG00000017346">
    <property type="expression patterns" value="Expressed in dorsolateral prefrontal cortex and 21 other cell types or tissues"/>
</dbReference>
<dbReference type="GO" id="GO:0005886">
    <property type="term" value="C:plasma membrane"/>
    <property type="evidence" value="ECO:0007669"/>
    <property type="project" value="UniProtKB-SubCell"/>
</dbReference>
<dbReference type="GO" id="GO:0005509">
    <property type="term" value="F:calcium ion binding"/>
    <property type="evidence" value="ECO:0007669"/>
    <property type="project" value="InterPro"/>
</dbReference>
<dbReference type="GO" id="GO:0007156">
    <property type="term" value="P:homophilic cell adhesion via plasma membrane adhesion molecules"/>
    <property type="evidence" value="ECO:0007669"/>
    <property type="project" value="InterPro"/>
</dbReference>
<dbReference type="GO" id="GO:0007399">
    <property type="term" value="P:nervous system development"/>
    <property type="evidence" value="ECO:0007669"/>
    <property type="project" value="UniProtKB-ARBA"/>
</dbReference>
<dbReference type="CDD" id="cd11304">
    <property type="entry name" value="Cadherin_repeat"/>
    <property type="match status" value="6"/>
</dbReference>
<dbReference type="FunFam" id="2.60.40.60:FF:000004">
    <property type="entry name" value="Protocadherin 1 gamma 2"/>
    <property type="match status" value="1"/>
</dbReference>
<dbReference type="FunFam" id="2.60.40.60:FF:000001">
    <property type="entry name" value="Protocadherin alpha 2"/>
    <property type="match status" value="1"/>
</dbReference>
<dbReference type="FunFam" id="2.60.40.60:FF:000002">
    <property type="entry name" value="Protocadherin alpha 2"/>
    <property type="match status" value="1"/>
</dbReference>
<dbReference type="FunFam" id="2.60.40.60:FF:000006">
    <property type="entry name" value="Protocadherin alpha 2"/>
    <property type="match status" value="1"/>
</dbReference>
<dbReference type="FunFam" id="2.60.40.60:FF:000129">
    <property type="entry name" value="protocadherin alpha-C2 isoform X1"/>
    <property type="match status" value="1"/>
</dbReference>
<dbReference type="FunFam" id="2.60.40.60:FF:000018">
    <property type="entry name" value="Protocadherin gamma c3"/>
    <property type="match status" value="1"/>
</dbReference>
<dbReference type="Gene3D" id="2.60.40.60">
    <property type="entry name" value="Cadherins"/>
    <property type="match status" value="6"/>
</dbReference>
<dbReference type="InterPro" id="IPR002126">
    <property type="entry name" value="Cadherin-like_dom"/>
</dbReference>
<dbReference type="InterPro" id="IPR015919">
    <property type="entry name" value="Cadherin-like_sf"/>
</dbReference>
<dbReference type="InterPro" id="IPR032455">
    <property type="entry name" value="Cadherin_C"/>
</dbReference>
<dbReference type="InterPro" id="IPR031904">
    <property type="entry name" value="Cadherin_CBD"/>
</dbReference>
<dbReference type="InterPro" id="IPR020894">
    <property type="entry name" value="Cadherin_CS"/>
</dbReference>
<dbReference type="InterPro" id="IPR013164">
    <property type="entry name" value="Cadherin_N"/>
</dbReference>
<dbReference type="InterPro" id="IPR050174">
    <property type="entry name" value="Protocadherin/Cadherin-CA"/>
</dbReference>
<dbReference type="PANTHER" id="PTHR24028">
    <property type="entry name" value="CADHERIN-87A"/>
    <property type="match status" value="1"/>
</dbReference>
<dbReference type="PANTHER" id="PTHR24028:SF86">
    <property type="entry name" value="PROTOCADHERIN GAMMA-A9"/>
    <property type="match status" value="1"/>
</dbReference>
<dbReference type="Pfam" id="PF00028">
    <property type="entry name" value="Cadherin"/>
    <property type="match status" value="5"/>
</dbReference>
<dbReference type="Pfam" id="PF08266">
    <property type="entry name" value="Cadherin_2"/>
    <property type="match status" value="1"/>
</dbReference>
<dbReference type="Pfam" id="PF16492">
    <property type="entry name" value="Cadherin_C_2"/>
    <property type="match status" value="1"/>
</dbReference>
<dbReference type="Pfam" id="PF15974">
    <property type="entry name" value="Cadherin_tail"/>
    <property type="match status" value="1"/>
</dbReference>
<dbReference type="PRINTS" id="PR00205">
    <property type="entry name" value="CADHERIN"/>
</dbReference>
<dbReference type="SMART" id="SM00112">
    <property type="entry name" value="CA"/>
    <property type="match status" value="6"/>
</dbReference>
<dbReference type="SUPFAM" id="SSF49313">
    <property type="entry name" value="Cadherin-like"/>
    <property type="match status" value="6"/>
</dbReference>
<dbReference type="PROSITE" id="PS00232">
    <property type="entry name" value="CADHERIN_1"/>
    <property type="match status" value="4"/>
</dbReference>
<dbReference type="PROSITE" id="PS50268">
    <property type="entry name" value="CADHERIN_2"/>
    <property type="match status" value="6"/>
</dbReference>
<keyword id="KW-0106">Calcium</keyword>
<keyword id="KW-0130">Cell adhesion</keyword>
<keyword id="KW-1003">Cell membrane</keyword>
<keyword id="KW-0325">Glycoprotein</keyword>
<keyword id="KW-0472">Membrane</keyword>
<keyword id="KW-1185">Reference proteome</keyword>
<keyword id="KW-0677">Repeat</keyword>
<keyword id="KW-0732">Signal</keyword>
<keyword id="KW-0812">Transmembrane</keyword>
<keyword id="KW-1133">Transmembrane helix</keyword>
<comment type="function">
    <text>Potential calcium-dependent cell-adhesion protein. May be involved in the establishment and maintenance of specific neuronal connections in the brain.</text>
</comment>
<comment type="subcellular location">
    <subcellularLocation>
        <location evidence="1">Cell membrane</location>
        <topology evidence="1">Single-pass type I membrane protein</topology>
    </subcellularLocation>
</comment>
<feature type="signal peptide" evidence="2">
    <location>
        <begin position="1"/>
        <end position="28"/>
    </location>
</feature>
<feature type="chain" id="PRO_0000003965" description="Protocadherin gamma-A9">
    <location>
        <begin position="29"/>
        <end position="932"/>
    </location>
</feature>
<feature type="topological domain" description="Extracellular" evidence="2">
    <location>
        <begin position="29"/>
        <end position="692"/>
    </location>
</feature>
<feature type="transmembrane region" description="Helical" evidence="2">
    <location>
        <begin position="693"/>
        <end position="713"/>
    </location>
</feature>
<feature type="topological domain" description="Cytoplasmic" evidence="2">
    <location>
        <begin position="714"/>
        <end position="932"/>
    </location>
</feature>
<feature type="domain" description="Cadherin 1" evidence="3">
    <location>
        <begin position="29"/>
        <end position="133"/>
    </location>
</feature>
<feature type="domain" description="Cadherin 2" evidence="3">
    <location>
        <begin position="134"/>
        <end position="242"/>
    </location>
</feature>
<feature type="domain" description="Cadherin 3" evidence="3">
    <location>
        <begin position="243"/>
        <end position="347"/>
    </location>
</feature>
<feature type="domain" description="Cadherin 4" evidence="3">
    <location>
        <begin position="348"/>
        <end position="452"/>
    </location>
</feature>
<feature type="domain" description="Cadherin 5" evidence="3">
    <location>
        <begin position="453"/>
        <end position="562"/>
    </location>
</feature>
<feature type="domain" description="Cadherin 6" evidence="3">
    <location>
        <begin position="570"/>
        <end position="683"/>
    </location>
</feature>
<feature type="region of interest" description="Disordered" evidence="4">
    <location>
        <begin position="803"/>
        <end position="841"/>
    </location>
</feature>
<feature type="region of interest" description="Disordered" evidence="4">
    <location>
        <begin position="902"/>
        <end position="932"/>
    </location>
</feature>
<feature type="compositionally biased region" description="Polar residues" evidence="4">
    <location>
        <begin position="816"/>
        <end position="841"/>
    </location>
</feature>
<feature type="compositionally biased region" description="Basic residues" evidence="4">
    <location>
        <begin position="922"/>
        <end position="932"/>
    </location>
</feature>
<feature type="glycosylation site" description="N-linked (GlcNAc...) asparagine" evidence="2">
    <location>
        <position position="47"/>
    </location>
</feature>
<feature type="glycosylation site" description="N-linked (GlcNAc...) asparagine" evidence="2">
    <location>
        <position position="127"/>
    </location>
</feature>
<feature type="glycosylation site" description="N-linked (GlcNAc...) asparagine" evidence="2">
    <location>
        <position position="389"/>
    </location>
</feature>
<feature type="glycosylation site" description="N-linked (GlcNAc...) asparagine" evidence="2">
    <location>
        <position position="419"/>
    </location>
</feature>
<feature type="glycosylation site" description="N-linked (GlcNAc...) asparagine" evidence="2">
    <location>
        <position position="545"/>
    </location>
</feature>
<reference key="1">
    <citation type="journal article" date="2005" name="Nature">
        <title>Initial sequence of the chimpanzee genome and comparison with the human genome.</title>
        <authorList>
            <consortium name="Chimpanzee sequencing and analysis consortium"/>
        </authorList>
    </citation>
    <scope>NUCLEOTIDE SEQUENCE [LARGE SCALE GENOMIC DNA]</scope>
</reference>
<reference key="2">
    <citation type="journal article" date="2005" name="Genetics">
        <title>Comparative genomics and diversifying selection of the clustered vertebrate protocadherin genes.</title>
        <authorList>
            <person name="Wu Q."/>
        </authorList>
    </citation>
    <scope>IDENTIFICATION</scope>
</reference>
<proteinExistence type="inferred from homology"/>
<protein>
    <recommendedName>
        <fullName>Protocadherin gamma-A9</fullName>
        <shortName>PCDH-gamma-A9</shortName>
    </recommendedName>
</protein>